<dbReference type="EMBL" id="AF153440">
    <property type="protein sequence ID" value="AAK60413.1"/>
    <property type="molecule type" value="mRNA"/>
</dbReference>
<dbReference type="EMBL" id="AK011305">
    <property type="protein sequence ID" value="BAB27531.1"/>
    <property type="molecule type" value="mRNA"/>
</dbReference>
<dbReference type="EMBL" id="AK045192">
    <property type="protein sequence ID" value="BAC32256.1"/>
    <property type="molecule type" value="mRNA"/>
</dbReference>
<dbReference type="EMBL" id="AK164632">
    <property type="protein sequence ID" value="BAE37852.1"/>
    <property type="molecule type" value="mRNA"/>
</dbReference>
<dbReference type="EMBL" id="BC019378">
    <property type="protein sequence ID" value="AAH19378.1"/>
    <property type="molecule type" value="mRNA"/>
</dbReference>
<dbReference type="CCDS" id="CCDS29034.1"/>
<dbReference type="RefSeq" id="NP_080781.1">
    <property type="nucleotide sequence ID" value="NM_026505.2"/>
</dbReference>
<dbReference type="RefSeq" id="XP_030106445.1">
    <property type="nucleotide sequence ID" value="XM_030250585.1"/>
</dbReference>
<dbReference type="BioGRID" id="212594">
    <property type="interactions" value="2"/>
</dbReference>
<dbReference type="FunCoup" id="Q9D0L6">
    <property type="interactions" value="1330"/>
</dbReference>
<dbReference type="IntAct" id="Q9D0L6">
    <property type="interactions" value="1"/>
</dbReference>
<dbReference type="STRING" id="10090.ENSMUSP00000025075"/>
<dbReference type="GlyCosmos" id="Q9D0L6">
    <property type="glycosylation" value="1 site, No reported glycans"/>
</dbReference>
<dbReference type="GlyGen" id="Q9D0L6">
    <property type="glycosylation" value="1 site"/>
</dbReference>
<dbReference type="PhosphoSitePlus" id="Q9D0L6"/>
<dbReference type="PaxDb" id="10090-ENSMUSP00000025075"/>
<dbReference type="ProteomicsDB" id="277177"/>
<dbReference type="ABCD" id="Q9D0L6">
    <property type="antibodies" value="6 sequenced antibodies"/>
</dbReference>
<dbReference type="Antibodypedia" id="26191">
    <property type="antibodies" value="283 antibodies from 31 providers"/>
</dbReference>
<dbReference type="DNASU" id="68010"/>
<dbReference type="Ensembl" id="ENSMUST00000025075.3">
    <property type="protein sequence ID" value="ENSMUSP00000025075.2"/>
    <property type="gene ID" value="ENSMUSG00000024232.3"/>
</dbReference>
<dbReference type="GeneID" id="68010"/>
<dbReference type="KEGG" id="mmu:68010"/>
<dbReference type="UCSC" id="uc008dyc.1">
    <property type="organism name" value="mouse"/>
</dbReference>
<dbReference type="AGR" id="MGI:1915260"/>
<dbReference type="CTD" id="25805"/>
<dbReference type="MGI" id="MGI:1915260">
    <property type="gene designation" value="Bambi"/>
</dbReference>
<dbReference type="VEuPathDB" id="HostDB:ENSMUSG00000024232"/>
<dbReference type="eggNOG" id="ENOG502QXJJ">
    <property type="taxonomic scope" value="Eukaryota"/>
</dbReference>
<dbReference type="GeneTree" id="ENSGT00940000154101"/>
<dbReference type="HOGENOM" id="CLU_093515_0_0_1"/>
<dbReference type="InParanoid" id="Q9D0L6"/>
<dbReference type="OMA" id="TVECCHE"/>
<dbReference type="OrthoDB" id="5914644at2759"/>
<dbReference type="PhylomeDB" id="Q9D0L6"/>
<dbReference type="TreeFam" id="TF333466"/>
<dbReference type="Reactome" id="R-MMU-2173788">
    <property type="pathway name" value="Downregulation of TGF-beta receptor signaling"/>
</dbReference>
<dbReference type="BioGRID-ORCS" id="68010">
    <property type="hits" value="2 hits in 77 CRISPR screens"/>
</dbReference>
<dbReference type="ChiTaRS" id="Bambi">
    <property type="organism name" value="mouse"/>
</dbReference>
<dbReference type="PRO" id="PR:Q9D0L6"/>
<dbReference type="Proteomes" id="UP000000589">
    <property type="component" value="Chromosome 18"/>
</dbReference>
<dbReference type="RNAct" id="Q9D0L6">
    <property type="molecule type" value="protein"/>
</dbReference>
<dbReference type="Bgee" id="ENSMUSG00000024232">
    <property type="expression patterns" value="Expressed in calcareous tooth and 286 other cell types or tissues"/>
</dbReference>
<dbReference type="GO" id="GO:0005737">
    <property type="term" value="C:cytoplasm"/>
    <property type="evidence" value="ECO:0007669"/>
    <property type="project" value="Ensembl"/>
</dbReference>
<dbReference type="GO" id="GO:0016020">
    <property type="term" value="C:membrane"/>
    <property type="evidence" value="ECO:0000247"/>
    <property type="project" value="MGI"/>
</dbReference>
<dbReference type="GO" id="GO:0005886">
    <property type="term" value="C:plasma membrane"/>
    <property type="evidence" value="ECO:0007669"/>
    <property type="project" value="Ensembl"/>
</dbReference>
<dbReference type="GO" id="GO:0005109">
    <property type="term" value="F:frizzled binding"/>
    <property type="evidence" value="ECO:0007669"/>
    <property type="project" value="Ensembl"/>
</dbReference>
<dbReference type="GO" id="GO:0016477">
    <property type="term" value="P:cell migration"/>
    <property type="evidence" value="ECO:0007669"/>
    <property type="project" value="Ensembl"/>
</dbReference>
<dbReference type="GO" id="GO:0030514">
    <property type="term" value="P:negative regulation of BMP signaling pathway"/>
    <property type="evidence" value="ECO:0007669"/>
    <property type="project" value="Ensembl"/>
</dbReference>
<dbReference type="GO" id="GO:0045668">
    <property type="term" value="P:negative regulation of osteoblast differentiation"/>
    <property type="evidence" value="ECO:0007669"/>
    <property type="project" value="Ensembl"/>
</dbReference>
<dbReference type="GO" id="GO:0030512">
    <property type="term" value="P:negative regulation of transforming growth factor beta receptor signaling pathway"/>
    <property type="evidence" value="ECO:0007669"/>
    <property type="project" value="Ensembl"/>
</dbReference>
<dbReference type="GO" id="GO:0090263">
    <property type="term" value="P:positive regulation of canonical Wnt signaling pathway"/>
    <property type="evidence" value="ECO:0007669"/>
    <property type="project" value="Ensembl"/>
</dbReference>
<dbReference type="GO" id="GO:0008284">
    <property type="term" value="P:positive regulation of cell population proliferation"/>
    <property type="evidence" value="ECO:0007669"/>
    <property type="project" value="Ensembl"/>
</dbReference>
<dbReference type="GO" id="GO:0045893">
    <property type="term" value="P:positive regulation of DNA-templated transcription"/>
    <property type="evidence" value="ECO:0007669"/>
    <property type="project" value="Ensembl"/>
</dbReference>
<dbReference type="GO" id="GO:0010718">
    <property type="term" value="P:positive regulation of epithelial to mesenchymal transition"/>
    <property type="evidence" value="ECO:0007669"/>
    <property type="project" value="Ensembl"/>
</dbReference>
<dbReference type="GO" id="GO:0008360">
    <property type="term" value="P:regulation of cell shape"/>
    <property type="evidence" value="ECO:0007669"/>
    <property type="project" value="Ensembl"/>
</dbReference>
<dbReference type="GO" id="GO:0007179">
    <property type="term" value="P:transforming growth factor beta receptor signaling pathway"/>
    <property type="evidence" value="ECO:0000247"/>
    <property type="project" value="MGI"/>
</dbReference>
<dbReference type="CDD" id="cd23576">
    <property type="entry name" value="TFP_LU_ECD_BAMBI"/>
    <property type="match status" value="1"/>
</dbReference>
<dbReference type="FunFam" id="2.10.60.10:FF:000018">
    <property type="entry name" value="BMP and activin membrane-bound inhibitor homolog"/>
    <property type="match status" value="1"/>
</dbReference>
<dbReference type="Gene3D" id="2.10.60.10">
    <property type="entry name" value="CD59"/>
    <property type="match status" value="1"/>
</dbReference>
<dbReference type="InterPro" id="IPR009345">
    <property type="entry name" value="BAMBI"/>
</dbReference>
<dbReference type="InterPro" id="IPR045806">
    <property type="entry name" value="BAMBI_C"/>
</dbReference>
<dbReference type="InterPro" id="IPR045807">
    <property type="entry name" value="BAMBI_N"/>
</dbReference>
<dbReference type="InterPro" id="IPR045860">
    <property type="entry name" value="Snake_toxin-like_sf"/>
</dbReference>
<dbReference type="PANTHER" id="PTHR15505:SF1">
    <property type="entry name" value="BMP AND ACTIVIN MEMBRANE-BOUND INHIBITOR HOMOLOG"/>
    <property type="match status" value="1"/>
</dbReference>
<dbReference type="PANTHER" id="PTHR15505">
    <property type="entry name" value="RIIA DOMAIN-CONTAINING PROTEIN 1"/>
    <property type="match status" value="1"/>
</dbReference>
<dbReference type="Pfam" id="PF06211">
    <property type="entry name" value="BAMBI"/>
    <property type="match status" value="1"/>
</dbReference>
<dbReference type="Pfam" id="PF19337">
    <property type="entry name" value="BAMBI_C"/>
    <property type="match status" value="1"/>
</dbReference>
<dbReference type="PIRSF" id="PIRSF037456">
    <property type="entry name" value="BAMBI"/>
    <property type="match status" value="1"/>
</dbReference>
<dbReference type="SUPFAM" id="SSF57302">
    <property type="entry name" value="Snake toxin-like"/>
    <property type="match status" value="1"/>
</dbReference>
<comment type="function">
    <text evidence="1">Negatively regulates TGF-beta signaling.</text>
</comment>
<comment type="subcellular location">
    <subcellularLocation>
        <location evidence="4">Membrane</location>
        <topology evidence="4">Single-pass type I membrane protein</topology>
    </subcellularLocation>
</comment>
<comment type="developmental stage">
    <text evidence="3">Expressed at high levels during odontogenesis.</text>
</comment>
<comment type="similarity">
    <text evidence="4">Belongs to the BAMBI family.</text>
</comment>
<organism>
    <name type="scientific">Mus musculus</name>
    <name type="common">Mouse</name>
    <dbReference type="NCBI Taxonomy" id="10090"/>
    <lineage>
        <taxon>Eukaryota</taxon>
        <taxon>Metazoa</taxon>
        <taxon>Chordata</taxon>
        <taxon>Craniata</taxon>
        <taxon>Vertebrata</taxon>
        <taxon>Euteleostomi</taxon>
        <taxon>Mammalia</taxon>
        <taxon>Eutheria</taxon>
        <taxon>Euarchontoglires</taxon>
        <taxon>Glires</taxon>
        <taxon>Rodentia</taxon>
        <taxon>Myomorpha</taxon>
        <taxon>Muroidea</taxon>
        <taxon>Muridae</taxon>
        <taxon>Murinae</taxon>
        <taxon>Mus</taxon>
        <taxon>Mus</taxon>
    </lineage>
</organism>
<sequence>MDRHSSYFFIWLQLELCAMAVLLTKGEIRCYCDAAHCVATGYMCKSELSACFSRLLDPQNTNSPLTHGCLDSLASTADICRAKQAQNHSGPAMPTLECCHEDMCNYRGLHDVLSPSKSEASGQGNRYQHDSSRNLITKMQELTSSKELWFRAAVIAVPIAGGLILVLLIMLALRMLRSENKRLQDERQQMLSRLHYSFHGHHSKKGQVAKLDLECMVPVSGQENCCLTCDKMRQAELSNEKILSLVHWGMYSGHGKLEFI</sequence>
<protein>
    <recommendedName>
        <fullName>BMP and activin membrane-bound inhibitor homolog</fullName>
    </recommendedName>
    <alternativeName>
        <fullName>Putative transmembrane protein NMA</fullName>
    </alternativeName>
</protein>
<keyword id="KW-0325">Glycoprotein</keyword>
<keyword id="KW-0472">Membrane</keyword>
<keyword id="KW-1185">Reference proteome</keyword>
<keyword id="KW-0732">Signal</keyword>
<keyword id="KW-0812">Transmembrane</keyword>
<keyword id="KW-1133">Transmembrane helix</keyword>
<reference key="1">
    <citation type="journal article" date="2001" name="J. Dent. Res.">
        <title>Cloning, characterization, and tissue expression pattern of mouse Nma/BAMBI during odontogenesis.</title>
        <authorList>
            <person name="Knight C."/>
            <person name="Simmons D."/>
            <person name="Gu T.T."/>
            <person name="Gluhak-Heinrich J."/>
            <person name="Pavlin D."/>
            <person name="Zeichner-David M."/>
            <person name="MacDougall M."/>
        </authorList>
    </citation>
    <scope>NUCLEOTIDE SEQUENCE [MRNA]</scope>
    <scope>DEVELOPMENTAL STAGE</scope>
    <source>
        <strain>Swiss Webster</strain>
        <tissue>Tooth</tissue>
    </source>
</reference>
<reference key="2">
    <citation type="journal article" date="2005" name="Science">
        <title>The transcriptional landscape of the mammalian genome.</title>
        <authorList>
            <person name="Carninci P."/>
            <person name="Kasukawa T."/>
            <person name="Katayama S."/>
            <person name="Gough J."/>
            <person name="Frith M.C."/>
            <person name="Maeda N."/>
            <person name="Oyama R."/>
            <person name="Ravasi T."/>
            <person name="Lenhard B."/>
            <person name="Wells C."/>
            <person name="Kodzius R."/>
            <person name="Shimokawa K."/>
            <person name="Bajic V.B."/>
            <person name="Brenner S.E."/>
            <person name="Batalov S."/>
            <person name="Forrest A.R."/>
            <person name="Zavolan M."/>
            <person name="Davis M.J."/>
            <person name="Wilming L.G."/>
            <person name="Aidinis V."/>
            <person name="Allen J.E."/>
            <person name="Ambesi-Impiombato A."/>
            <person name="Apweiler R."/>
            <person name="Aturaliya R.N."/>
            <person name="Bailey T.L."/>
            <person name="Bansal M."/>
            <person name="Baxter L."/>
            <person name="Beisel K.W."/>
            <person name="Bersano T."/>
            <person name="Bono H."/>
            <person name="Chalk A.M."/>
            <person name="Chiu K.P."/>
            <person name="Choudhary V."/>
            <person name="Christoffels A."/>
            <person name="Clutterbuck D.R."/>
            <person name="Crowe M.L."/>
            <person name="Dalla E."/>
            <person name="Dalrymple B.P."/>
            <person name="de Bono B."/>
            <person name="Della Gatta G."/>
            <person name="di Bernardo D."/>
            <person name="Down T."/>
            <person name="Engstrom P."/>
            <person name="Fagiolini M."/>
            <person name="Faulkner G."/>
            <person name="Fletcher C.F."/>
            <person name="Fukushima T."/>
            <person name="Furuno M."/>
            <person name="Futaki S."/>
            <person name="Gariboldi M."/>
            <person name="Georgii-Hemming P."/>
            <person name="Gingeras T.R."/>
            <person name="Gojobori T."/>
            <person name="Green R.E."/>
            <person name="Gustincich S."/>
            <person name="Harbers M."/>
            <person name="Hayashi Y."/>
            <person name="Hensch T.K."/>
            <person name="Hirokawa N."/>
            <person name="Hill D."/>
            <person name="Huminiecki L."/>
            <person name="Iacono M."/>
            <person name="Ikeo K."/>
            <person name="Iwama A."/>
            <person name="Ishikawa T."/>
            <person name="Jakt M."/>
            <person name="Kanapin A."/>
            <person name="Katoh M."/>
            <person name="Kawasawa Y."/>
            <person name="Kelso J."/>
            <person name="Kitamura H."/>
            <person name="Kitano H."/>
            <person name="Kollias G."/>
            <person name="Krishnan S.P."/>
            <person name="Kruger A."/>
            <person name="Kummerfeld S.K."/>
            <person name="Kurochkin I.V."/>
            <person name="Lareau L.F."/>
            <person name="Lazarevic D."/>
            <person name="Lipovich L."/>
            <person name="Liu J."/>
            <person name="Liuni S."/>
            <person name="McWilliam S."/>
            <person name="Madan Babu M."/>
            <person name="Madera M."/>
            <person name="Marchionni L."/>
            <person name="Matsuda H."/>
            <person name="Matsuzawa S."/>
            <person name="Miki H."/>
            <person name="Mignone F."/>
            <person name="Miyake S."/>
            <person name="Morris K."/>
            <person name="Mottagui-Tabar S."/>
            <person name="Mulder N."/>
            <person name="Nakano N."/>
            <person name="Nakauchi H."/>
            <person name="Ng P."/>
            <person name="Nilsson R."/>
            <person name="Nishiguchi S."/>
            <person name="Nishikawa S."/>
            <person name="Nori F."/>
            <person name="Ohara O."/>
            <person name="Okazaki Y."/>
            <person name="Orlando V."/>
            <person name="Pang K.C."/>
            <person name="Pavan W.J."/>
            <person name="Pavesi G."/>
            <person name="Pesole G."/>
            <person name="Petrovsky N."/>
            <person name="Piazza S."/>
            <person name="Reed J."/>
            <person name="Reid J.F."/>
            <person name="Ring B.Z."/>
            <person name="Ringwald M."/>
            <person name="Rost B."/>
            <person name="Ruan Y."/>
            <person name="Salzberg S.L."/>
            <person name="Sandelin A."/>
            <person name="Schneider C."/>
            <person name="Schoenbach C."/>
            <person name="Sekiguchi K."/>
            <person name="Semple C.A."/>
            <person name="Seno S."/>
            <person name="Sessa L."/>
            <person name="Sheng Y."/>
            <person name="Shibata Y."/>
            <person name="Shimada H."/>
            <person name="Shimada K."/>
            <person name="Silva D."/>
            <person name="Sinclair B."/>
            <person name="Sperling S."/>
            <person name="Stupka E."/>
            <person name="Sugiura K."/>
            <person name="Sultana R."/>
            <person name="Takenaka Y."/>
            <person name="Taki K."/>
            <person name="Tammoja K."/>
            <person name="Tan S.L."/>
            <person name="Tang S."/>
            <person name="Taylor M.S."/>
            <person name="Tegner J."/>
            <person name="Teichmann S.A."/>
            <person name="Ueda H.R."/>
            <person name="van Nimwegen E."/>
            <person name="Verardo R."/>
            <person name="Wei C.L."/>
            <person name="Yagi K."/>
            <person name="Yamanishi H."/>
            <person name="Zabarovsky E."/>
            <person name="Zhu S."/>
            <person name="Zimmer A."/>
            <person name="Hide W."/>
            <person name="Bult C."/>
            <person name="Grimmond S.M."/>
            <person name="Teasdale R.D."/>
            <person name="Liu E.T."/>
            <person name="Brusic V."/>
            <person name="Quackenbush J."/>
            <person name="Wahlestedt C."/>
            <person name="Mattick J.S."/>
            <person name="Hume D.A."/>
            <person name="Kai C."/>
            <person name="Sasaki D."/>
            <person name="Tomaru Y."/>
            <person name="Fukuda S."/>
            <person name="Kanamori-Katayama M."/>
            <person name="Suzuki M."/>
            <person name="Aoki J."/>
            <person name="Arakawa T."/>
            <person name="Iida J."/>
            <person name="Imamura K."/>
            <person name="Itoh M."/>
            <person name="Kato T."/>
            <person name="Kawaji H."/>
            <person name="Kawagashira N."/>
            <person name="Kawashima T."/>
            <person name="Kojima M."/>
            <person name="Kondo S."/>
            <person name="Konno H."/>
            <person name="Nakano K."/>
            <person name="Ninomiya N."/>
            <person name="Nishio T."/>
            <person name="Okada M."/>
            <person name="Plessy C."/>
            <person name="Shibata K."/>
            <person name="Shiraki T."/>
            <person name="Suzuki S."/>
            <person name="Tagami M."/>
            <person name="Waki K."/>
            <person name="Watahiki A."/>
            <person name="Okamura-Oho Y."/>
            <person name="Suzuki H."/>
            <person name="Kawai J."/>
            <person name="Hayashizaki Y."/>
        </authorList>
    </citation>
    <scope>NUCLEOTIDE SEQUENCE [LARGE SCALE MRNA]</scope>
    <source>
        <strain>C57BL/6J</strain>
        <tissue>Embryo</tissue>
        <tissue>Lung</tissue>
    </source>
</reference>
<reference key="3">
    <citation type="journal article" date="2004" name="Genome Res.">
        <title>The status, quality, and expansion of the NIH full-length cDNA project: the Mammalian Gene Collection (MGC).</title>
        <authorList>
            <consortium name="The MGC Project Team"/>
        </authorList>
    </citation>
    <scope>NUCLEOTIDE SEQUENCE [LARGE SCALE MRNA]</scope>
</reference>
<name>BAMBI_MOUSE</name>
<evidence type="ECO:0000250" key="1"/>
<evidence type="ECO:0000255" key="2"/>
<evidence type="ECO:0000269" key="3">
    <source>
    </source>
</evidence>
<evidence type="ECO:0000305" key="4"/>
<gene>
    <name type="primary">Bambi</name>
    <name type="synonym">Nma</name>
</gene>
<feature type="signal peptide" evidence="2">
    <location>
        <begin position="1"/>
        <end position="26"/>
    </location>
</feature>
<feature type="chain" id="PRO_0000020780" description="BMP and activin membrane-bound inhibitor homolog">
    <location>
        <begin position="27"/>
        <end position="260"/>
    </location>
</feature>
<feature type="topological domain" description="Extracellular" evidence="2">
    <location>
        <begin position="27"/>
        <end position="152"/>
    </location>
</feature>
<feature type="transmembrane region" description="Helical" evidence="2">
    <location>
        <begin position="153"/>
        <end position="173"/>
    </location>
</feature>
<feature type="topological domain" description="Cytoplasmic" evidence="2">
    <location>
        <begin position="174"/>
        <end position="260"/>
    </location>
</feature>
<feature type="glycosylation site" description="N-linked (GlcNAc...) asparagine" evidence="2">
    <location>
        <position position="87"/>
    </location>
</feature>
<feature type="sequence conflict" description="In Ref. 1; AAK60413." evidence="4" ref="1">
    <original>G</original>
    <variation>E</variation>
    <location>
        <position position="26"/>
    </location>
</feature>
<feature type="sequence conflict" description="In Ref. 1; AAK60413." evidence="4" ref="1">
    <original>SKS</original>
    <variation>PRG</variation>
    <location>
        <begin position="116"/>
        <end position="118"/>
    </location>
</feature>
<feature type="sequence conflict" description="In Ref. 1; AAK60413." evidence="4" ref="1">
    <original>K</original>
    <variation>N</variation>
    <location>
        <position position="138"/>
    </location>
</feature>
<feature type="sequence conflict" description="In Ref. 1; AAK60413." evidence="4" ref="1">
    <original>N</original>
    <variation>I</variation>
    <location>
        <position position="180"/>
    </location>
</feature>
<accession>Q9D0L6</accession>
<accession>Q3TP85</accession>
<accession>Q91XS6</accession>
<proteinExistence type="evidence at transcript level"/>